<keyword id="KW-1203">Blood coagulation cascade inhibiting toxin</keyword>
<keyword id="KW-0106">Calcium</keyword>
<keyword id="KW-0903">Direct protein sequencing</keyword>
<keyword id="KW-1015">Disulfide bond</keyword>
<keyword id="KW-1199">Hemostasis impairing toxin</keyword>
<keyword id="KW-0378">Hydrolase</keyword>
<keyword id="KW-0479">Metal-binding</keyword>
<keyword id="KW-1201">Platelet aggregation inhibiting toxin</keyword>
<keyword id="KW-0964">Secreted</keyword>
<keyword id="KW-0800">Toxin</keyword>
<organism>
    <name type="scientific">Naja haje haje</name>
    <name type="common">Egyptian cobra</name>
    <dbReference type="NCBI Taxonomy" id="8642"/>
    <lineage>
        <taxon>Eukaryota</taxon>
        <taxon>Metazoa</taxon>
        <taxon>Chordata</taxon>
        <taxon>Craniata</taxon>
        <taxon>Vertebrata</taxon>
        <taxon>Euteleostomi</taxon>
        <taxon>Lepidosauria</taxon>
        <taxon>Squamata</taxon>
        <taxon>Bifurcata</taxon>
        <taxon>Unidentata</taxon>
        <taxon>Episquamata</taxon>
        <taxon>Toxicofera</taxon>
        <taxon>Serpentes</taxon>
        <taxon>Colubroidea</taxon>
        <taxon>Elapidae</taxon>
        <taxon>Elapinae</taxon>
        <taxon>Naja</taxon>
    </lineage>
</organism>
<reference key="1">
    <citation type="journal article" date="2010" name="Toxicon">
        <title>A new type of thrombin inhibitor, noncytotoxic phospholipase A2, from the Naja haje cobra venom.</title>
        <authorList>
            <person name="Osipov A.V."/>
            <person name="Filkin S.Y."/>
            <person name="Makarova Y.V."/>
            <person name="Tsetlin V.I."/>
            <person name="Utkin Y.N."/>
        </authorList>
    </citation>
    <scope>PROTEIN SEQUENCE</scope>
    <scope>FUNCTION</scope>
    <scope>SUBCELLULAR LOCATION</scope>
    <scope>SUBUNIT</scope>
    <scope>CATALYTIC ACTIVITY</scope>
    <scope>BIOPHYSICOCHEMICAL PROPERTIES</scope>
    <scope>MASS SPECTROMETRY</scope>
    <source>
        <tissue>Venom</tissue>
    </source>
</reference>
<dbReference type="EC" id="3.1.1.4" evidence="4"/>
<dbReference type="SMR" id="P0DUG4"/>
<dbReference type="GO" id="GO:0005576">
    <property type="term" value="C:extracellular region"/>
    <property type="evidence" value="ECO:0007669"/>
    <property type="project" value="UniProtKB-SubCell"/>
</dbReference>
<dbReference type="GO" id="GO:0046872">
    <property type="term" value="F:metal ion binding"/>
    <property type="evidence" value="ECO:0007669"/>
    <property type="project" value="UniProtKB-KW"/>
</dbReference>
<dbReference type="GO" id="GO:0004623">
    <property type="term" value="F:phospholipase A2 activity"/>
    <property type="evidence" value="ECO:0007669"/>
    <property type="project" value="UniProtKB-EC"/>
</dbReference>
<dbReference type="GO" id="GO:0090729">
    <property type="term" value="F:toxin activity"/>
    <property type="evidence" value="ECO:0007669"/>
    <property type="project" value="UniProtKB-KW"/>
</dbReference>
<dbReference type="GO" id="GO:0050482">
    <property type="term" value="P:arachidonate secretion"/>
    <property type="evidence" value="ECO:0007669"/>
    <property type="project" value="InterPro"/>
</dbReference>
<dbReference type="GO" id="GO:0006644">
    <property type="term" value="P:phospholipid metabolic process"/>
    <property type="evidence" value="ECO:0007669"/>
    <property type="project" value="InterPro"/>
</dbReference>
<dbReference type="Gene3D" id="1.20.90.10">
    <property type="entry name" value="Phospholipase A2 domain"/>
    <property type="match status" value="1"/>
</dbReference>
<dbReference type="InterPro" id="IPR036444">
    <property type="entry name" value="PLipase_A2_dom_sf"/>
</dbReference>
<dbReference type="InterPro" id="IPR033113">
    <property type="entry name" value="PLipase_A2_His_AS"/>
</dbReference>
<dbReference type="SUPFAM" id="SSF48619">
    <property type="entry name" value="Phospholipase A2, PLA2"/>
    <property type="match status" value="1"/>
</dbReference>
<dbReference type="PROSITE" id="PS00118">
    <property type="entry name" value="PA2_HIS"/>
    <property type="match status" value="1"/>
</dbReference>
<evidence type="ECO:0000250" key="1"/>
<evidence type="ECO:0000255" key="2">
    <source>
        <dbReference type="PROSITE-ProRule" id="PRU10035"/>
    </source>
</evidence>
<evidence type="ECO:0000255" key="3">
    <source>
        <dbReference type="PROSITE-ProRule" id="PRU10036"/>
    </source>
</evidence>
<evidence type="ECO:0000269" key="4">
    <source>
    </source>
</evidence>
<evidence type="ECO:0000303" key="5">
    <source>
    </source>
</evidence>
<evidence type="ECO:0000305" key="6"/>
<evidence type="ECO:0000305" key="7">
    <source>
    </source>
</evidence>
<protein>
    <recommendedName>
        <fullName evidence="5">Phospholipase A2 TI-Nh</fullName>
        <shortName>svPLA2</shortName>
        <ecNumber evidence="4">3.1.1.4</ecNumber>
    </recommendedName>
    <alternativeName>
        <fullName>Phosphatidylcholine 2-acylhydrolase</fullName>
    </alternativeName>
    <alternativeName>
        <fullName evidence="5">Thrombin inhibitor from Naja haje</fullName>
    </alternativeName>
</protein>
<proteinExistence type="evidence at protein level"/>
<feature type="chain" id="PRO_0000452214" description="Phospholipase A2 TI-Nh" evidence="4">
    <location>
        <begin position="1"/>
        <end position="48"/>
    </location>
</feature>
<feature type="active site" evidence="1">
    <location>
        <position position="25"/>
    </location>
</feature>
<feature type="binding site" evidence="1">
    <location>
        <position position="26"/>
    </location>
    <ligand>
        <name>Ca(2+)</name>
        <dbReference type="ChEBI" id="CHEBI:29108"/>
    </ligand>
</feature>
<feature type="disulfide bond" evidence="6">
    <location>
        <begin position="11"/>
        <end status="unknown"/>
    </location>
</feature>
<feature type="disulfide bond" evidence="6">
    <location>
        <begin position="21"/>
        <end status="unknown"/>
    </location>
</feature>
<feature type="disulfide bond" evidence="6">
    <location>
        <begin position="22"/>
        <end status="unknown"/>
    </location>
</feature>
<feature type="disulfide bond" evidence="6">
    <location>
        <begin position="28"/>
        <end status="unknown"/>
    </location>
</feature>
<feature type="disulfide bond" evidence="6">
    <location>
        <begin position="38"/>
        <end status="unknown"/>
    </location>
</feature>
<feature type="non-consecutive residues" evidence="6">
    <location>
        <begin position="20"/>
        <end position="21"/>
    </location>
</feature>
<feature type="non-terminal residue" evidence="6">
    <location>
        <position position="48"/>
    </location>
</feature>
<accession>P0DUG4</accession>
<name>PA2TI_NAJHH</name>
<comment type="function">
    <text evidence="4">Phospholipase A2 with weak enzymatic activity, which partially inhibits thrombin enzymatic activity (Ki=73 nM), completely inhibits thrombin-induced platelet aggregation and retards fibrin clot formation (IC(50)=0.2 nM) (PubMed:19622365). May exert this anticoagulant effect through a non-enzymatic mechanism (PubMed:19622365).</text>
</comment>
<comment type="catalytic activity">
    <reaction evidence="2 3 4">
        <text>a 1,2-diacyl-sn-glycero-3-phosphocholine + H2O = a 1-acyl-sn-glycero-3-phosphocholine + a fatty acid + H(+)</text>
        <dbReference type="Rhea" id="RHEA:15801"/>
        <dbReference type="ChEBI" id="CHEBI:15377"/>
        <dbReference type="ChEBI" id="CHEBI:15378"/>
        <dbReference type="ChEBI" id="CHEBI:28868"/>
        <dbReference type="ChEBI" id="CHEBI:57643"/>
        <dbReference type="ChEBI" id="CHEBI:58168"/>
        <dbReference type="EC" id="3.1.1.4"/>
    </reaction>
</comment>
<comment type="cofactor">
    <cofactor evidence="1">
        <name>Ca(2+)</name>
        <dbReference type="ChEBI" id="CHEBI:29108"/>
    </cofactor>
    <text evidence="1">Binds 1 Ca(2+) ion.</text>
</comment>
<comment type="biophysicochemical properties">
    <kinetics>
        <Vmax>0.0012 umol/min/mg enzyme (from PMID:25522251)</Vmax>
    </kinetics>
</comment>
<comment type="subunit">
    <text evidence="4">Monomer.</text>
</comment>
<comment type="subcellular location">
    <subcellularLocation>
        <location evidence="4">Secreted</location>
    </subcellularLocation>
</comment>
<comment type="tissue specificity">
    <text evidence="7">Expressed by the venom gland.</text>
</comment>
<comment type="mass spectrometry" mass="14340.0" method="MALDI" evidence="4"/>
<comment type="miscellaneous">
    <text evidence="4">Negative results: does not exert detectable effects on both the intrinsic and extrinsic pathways of the coagulation cascade (up to 50 nM) (PubMed:19622365). Does not hydrolyze either fibrinogen or thrombin (PubMed:19622365). Does not have impact on already formed fibrin clot (PubMed:19622365). Is not toxic to PC12 tumor cells (up to 15 uM), but evokes neurite outgrowth in these cells (1 uM) (PubMed:19622365). Has not effect on ADP-induced platelet aggregation (PubMed:19622365).</text>
</comment>
<comment type="miscellaneous">
    <text evidence="4">The active site (His-25) is not easily accessible for modification by 4-bromophenacyl bromide (BPB).</text>
</comment>
<comment type="similarity">
    <text evidence="6">Belongs to the phospholipase A2 family. Group I subfamily. D49 sub-subfamily.</text>
</comment>
<sequence length="48" mass="5481">NVYQYRKMLQCAMPNGGPFECCQTHDNCYGEAEKLKACTSTHSSPYFK</sequence>